<keyword id="KW-0002">3D-structure</keyword>
<keyword id="KW-0025">Alternative splicing</keyword>
<keyword id="KW-0963">Cytoplasm</keyword>
<keyword id="KW-0209">Deafness</keyword>
<keyword id="KW-0225">Disease variant</keyword>
<keyword id="KW-0242">Dwarfism</keyword>
<keyword id="KW-0271">Exosome</keyword>
<keyword id="KW-0539">Nucleus</keyword>
<keyword id="KW-0597">Phosphoprotein</keyword>
<keyword id="KW-1267">Proteomics identification</keyword>
<keyword id="KW-1185">Reference proteome</keyword>
<keyword id="KW-0682">Retinitis pigmentosa</keyword>
<keyword id="KW-0694">RNA-binding</keyword>
<keyword id="KW-0698">rRNA processing</keyword>
<accession>Q13868</accession>
<accession>A3KFL3</accession>
<accession>A3KFL4</accession>
<accession>B4DKK6</accession>
<accession>Q9NUY4</accession>
<evidence type="ECO:0000269" key="1">
    <source>
    </source>
</evidence>
<evidence type="ECO:0000269" key="2">
    <source>
    </source>
</evidence>
<evidence type="ECO:0000269" key="3">
    <source>
    </source>
</evidence>
<evidence type="ECO:0000269" key="4">
    <source>
    </source>
</evidence>
<evidence type="ECO:0000269" key="5">
    <source>
    </source>
</evidence>
<evidence type="ECO:0000269" key="6">
    <source>
    </source>
</evidence>
<evidence type="ECO:0000269" key="7">
    <source>
    </source>
</evidence>
<evidence type="ECO:0000269" key="8">
    <source>
    </source>
</evidence>
<evidence type="ECO:0000303" key="9">
    <source>
    </source>
</evidence>
<evidence type="ECO:0000303" key="10">
    <source>
    </source>
</evidence>
<evidence type="ECO:0000305" key="11"/>
<evidence type="ECO:0000312" key="12">
    <source>
        <dbReference type="HGNC" id="HGNC:17097"/>
    </source>
</evidence>
<evidence type="ECO:0007744" key="13">
    <source>
        <dbReference type="PDB" id="2NN6"/>
    </source>
</evidence>
<evidence type="ECO:0007744" key="14">
    <source>
        <dbReference type="PDB" id="6D6Q"/>
    </source>
</evidence>
<evidence type="ECO:0007744" key="15">
    <source>
        <dbReference type="PDB" id="6D6R"/>
    </source>
</evidence>
<evidence type="ECO:0007744" key="16">
    <source>
        <dbReference type="PDB" id="6H25"/>
    </source>
</evidence>
<evidence type="ECO:0007744" key="17">
    <source>
    </source>
</evidence>
<evidence type="ECO:0007744" key="18">
    <source>
    </source>
</evidence>
<evidence type="ECO:0007744" key="19">
    <source>
    </source>
</evidence>
<evidence type="ECO:0007829" key="20">
    <source>
        <dbReference type="PDB" id="2NN6"/>
    </source>
</evidence>
<evidence type="ECO:0007829" key="21">
    <source>
        <dbReference type="PDB" id="6D6Q"/>
    </source>
</evidence>
<gene>
    <name evidence="12" type="primary">EXOSC2</name>
    <name evidence="10" type="synonym">RRP4</name>
</gene>
<dbReference type="EMBL" id="U07561">
    <property type="protein sequence ID" value="AAB60392.1"/>
    <property type="status" value="ALT_SEQ"/>
    <property type="molecule type" value="Genomic_DNA"/>
</dbReference>
<dbReference type="EMBL" id="AK001916">
    <property type="protein sequence ID" value="BAA91977.1"/>
    <property type="molecule type" value="mRNA"/>
</dbReference>
<dbReference type="EMBL" id="AK022460">
    <property type="protein sequence ID" value="BAB14043.1"/>
    <property type="molecule type" value="mRNA"/>
</dbReference>
<dbReference type="EMBL" id="AK296605">
    <property type="protein sequence ID" value="BAG59218.1"/>
    <property type="molecule type" value="mRNA"/>
</dbReference>
<dbReference type="EMBL" id="AL359092">
    <property type="status" value="NOT_ANNOTATED_CDS"/>
    <property type="molecule type" value="Genomic_DNA"/>
</dbReference>
<dbReference type="EMBL" id="CH471090">
    <property type="protein sequence ID" value="EAW87942.1"/>
    <property type="molecule type" value="Genomic_DNA"/>
</dbReference>
<dbReference type="EMBL" id="CH471090">
    <property type="protein sequence ID" value="EAW87944.1"/>
    <property type="molecule type" value="Genomic_DNA"/>
</dbReference>
<dbReference type="EMBL" id="BC000747">
    <property type="protein sequence ID" value="AAH00747.1"/>
    <property type="molecule type" value="mRNA"/>
</dbReference>
<dbReference type="CCDS" id="CCDS65160.1">
    <molecule id="Q13868-2"/>
</dbReference>
<dbReference type="CCDS" id="CCDS65161.1">
    <molecule id="Q13868-3"/>
</dbReference>
<dbReference type="CCDS" id="CCDS6935.1">
    <molecule id="Q13868-1"/>
</dbReference>
<dbReference type="RefSeq" id="NP_001269637.1">
    <molecule id="Q13868-2"/>
    <property type="nucleotide sequence ID" value="NM_001282708.1"/>
</dbReference>
<dbReference type="RefSeq" id="NP_001269638.1">
    <molecule id="Q13868-3"/>
    <property type="nucleotide sequence ID" value="NM_001282709.1"/>
</dbReference>
<dbReference type="RefSeq" id="NP_055100.2">
    <molecule id="Q13868-1"/>
    <property type="nucleotide sequence ID" value="NM_014285.6"/>
</dbReference>
<dbReference type="PDB" id="2NN6">
    <property type="method" value="X-ray"/>
    <property type="resolution" value="3.35 A"/>
    <property type="chains" value="H=1-293"/>
</dbReference>
<dbReference type="PDB" id="6D6Q">
    <property type="method" value="EM"/>
    <property type="resolution" value="3.45 A"/>
    <property type="chains" value="H=1-293"/>
</dbReference>
<dbReference type="PDB" id="6D6R">
    <property type="method" value="EM"/>
    <property type="resolution" value="3.45 A"/>
    <property type="chains" value="H=1-293"/>
</dbReference>
<dbReference type="PDB" id="6H25">
    <property type="method" value="EM"/>
    <property type="resolution" value="3.80 A"/>
    <property type="chains" value="H=1-293"/>
</dbReference>
<dbReference type="PDB" id="9G8M">
    <property type="method" value="EM"/>
    <property type="resolution" value="3.30 A"/>
    <property type="chains" value="I=1-293"/>
</dbReference>
<dbReference type="PDB" id="9G8N">
    <property type="method" value="EM"/>
    <property type="resolution" value="3.70 A"/>
    <property type="chains" value="I=1-293"/>
</dbReference>
<dbReference type="PDB" id="9G8O">
    <property type="method" value="EM"/>
    <property type="resolution" value="3.40 A"/>
    <property type="chains" value="I=1-293"/>
</dbReference>
<dbReference type="PDB" id="9G8P">
    <property type="method" value="EM"/>
    <property type="resolution" value="7.00 A"/>
    <property type="chains" value="I=1-293"/>
</dbReference>
<dbReference type="PDBsum" id="2NN6"/>
<dbReference type="PDBsum" id="6D6Q"/>
<dbReference type="PDBsum" id="6D6R"/>
<dbReference type="PDBsum" id="6H25"/>
<dbReference type="PDBsum" id="9G8M"/>
<dbReference type="PDBsum" id="9G8N"/>
<dbReference type="PDBsum" id="9G8O"/>
<dbReference type="PDBsum" id="9G8P"/>
<dbReference type="EMDB" id="EMD-0127"/>
<dbReference type="EMDB" id="EMD-0128"/>
<dbReference type="EMDB" id="EMD-14515"/>
<dbReference type="EMDB" id="EMD-51132"/>
<dbReference type="EMDB" id="EMD-51133"/>
<dbReference type="EMDB" id="EMD-51134"/>
<dbReference type="EMDB" id="EMD-51135"/>
<dbReference type="EMDB" id="EMD-7808"/>
<dbReference type="EMDB" id="EMD-7809"/>
<dbReference type="SMR" id="Q13868"/>
<dbReference type="BioGRID" id="116977">
    <property type="interactions" value="189"/>
</dbReference>
<dbReference type="ComplexPortal" id="CPX-476">
    <property type="entry name" value="Nuclear exosome complex, DIS3-EXOSC10 variant"/>
</dbReference>
<dbReference type="ComplexPortal" id="CPX-591">
    <property type="entry name" value="Nucleolar exosome complex, EXOSC10 variant"/>
</dbReference>
<dbReference type="ComplexPortal" id="CPX-592">
    <property type="entry name" value="Cytoplasmic exosome complex, DIS3L variant"/>
</dbReference>
<dbReference type="ComplexPortal" id="CPX-593">
    <property type="entry name" value="Exosome complex, DIS3 variant"/>
</dbReference>
<dbReference type="ComplexPortal" id="CPX-600">
    <property type="entry name" value="Cytoplasmic exosome complex, DIS3L-EXOSC10 variant"/>
</dbReference>
<dbReference type="CORUM" id="Q13868"/>
<dbReference type="DIP" id="DIP-31264N"/>
<dbReference type="FunCoup" id="Q13868">
    <property type="interactions" value="3281"/>
</dbReference>
<dbReference type="IntAct" id="Q13868">
    <property type="interactions" value="91"/>
</dbReference>
<dbReference type="MINT" id="Q13868"/>
<dbReference type="STRING" id="9606.ENSP00000361433"/>
<dbReference type="GlyGen" id="Q13868">
    <property type="glycosylation" value="2 sites, 1 O-linked glycan (1 site)"/>
</dbReference>
<dbReference type="iPTMnet" id="Q13868"/>
<dbReference type="MetOSite" id="Q13868"/>
<dbReference type="PhosphoSitePlus" id="Q13868"/>
<dbReference type="SwissPalm" id="Q13868"/>
<dbReference type="BioMuta" id="EXOSC2"/>
<dbReference type="DMDM" id="13878748"/>
<dbReference type="jPOST" id="Q13868"/>
<dbReference type="MassIVE" id="Q13868"/>
<dbReference type="PaxDb" id="9606-ENSP00000361433"/>
<dbReference type="PeptideAtlas" id="Q13868"/>
<dbReference type="ProteomicsDB" id="4467"/>
<dbReference type="ProteomicsDB" id="563"/>
<dbReference type="ProteomicsDB" id="59704">
    <molecule id="Q13868-1"/>
</dbReference>
<dbReference type="Pumba" id="Q13868"/>
<dbReference type="Antibodypedia" id="17999">
    <property type="antibodies" value="183 antibodies from 29 providers"/>
</dbReference>
<dbReference type="DNASU" id="23404"/>
<dbReference type="Ensembl" id="ENST00000372351.7">
    <molecule id="Q13868-3"/>
    <property type="protein sequence ID" value="ENSP00000361426.3"/>
    <property type="gene ID" value="ENSG00000130713.17"/>
</dbReference>
<dbReference type="Ensembl" id="ENST00000372358.10">
    <molecule id="Q13868-1"/>
    <property type="protein sequence ID" value="ENSP00000361433.5"/>
    <property type="gene ID" value="ENSG00000130713.17"/>
</dbReference>
<dbReference type="Ensembl" id="ENST00000546165.6">
    <molecule id="Q13868-2"/>
    <property type="protein sequence ID" value="ENSP00000444917.1"/>
    <property type="gene ID" value="ENSG00000130713.17"/>
</dbReference>
<dbReference type="Ensembl" id="ENST00000691284.1">
    <molecule id="Q13868-1"/>
    <property type="protein sequence ID" value="ENSP00000508620.1"/>
    <property type="gene ID" value="ENSG00000130713.17"/>
</dbReference>
<dbReference type="GeneID" id="23404"/>
<dbReference type="KEGG" id="hsa:23404"/>
<dbReference type="MANE-Select" id="ENST00000372358.10">
    <property type="protein sequence ID" value="ENSP00000361433.5"/>
    <property type="RefSeq nucleotide sequence ID" value="NM_014285.7"/>
    <property type="RefSeq protein sequence ID" value="NP_055100.2"/>
</dbReference>
<dbReference type="UCSC" id="uc004bzu.4">
    <molecule id="Q13868-1"/>
    <property type="organism name" value="human"/>
</dbReference>
<dbReference type="UCSC" id="uc033djg.2">
    <property type="organism name" value="human"/>
</dbReference>
<dbReference type="AGR" id="HGNC:17097"/>
<dbReference type="CTD" id="23404"/>
<dbReference type="DisGeNET" id="23404"/>
<dbReference type="GeneCards" id="EXOSC2"/>
<dbReference type="HGNC" id="HGNC:17097">
    <property type="gene designation" value="EXOSC2"/>
</dbReference>
<dbReference type="HPA" id="ENSG00000130713">
    <property type="expression patterns" value="Low tissue specificity"/>
</dbReference>
<dbReference type="MalaCards" id="EXOSC2"/>
<dbReference type="MIM" id="602238">
    <property type="type" value="gene"/>
</dbReference>
<dbReference type="MIM" id="617763">
    <property type="type" value="phenotype"/>
</dbReference>
<dbReference type="neXtProt" id="NX_Q13868"/>
<dbReference type="OpenTargets" id="ENSG00000130713"/>
<dbReference type="Orphanet" id="494439">
    <property type="disease" value="Retinitis pigmentosa-hearing loss-premature aging-short stature-facial dysmorphism syndrome"/>
</dbReference>
<dbReference type="PharmGKB" id="PA134876020"/>
<dbReference type="VEuPathDB" id="HostDB:ENSG00000130713"/>
<dbReference type="eggNOG" id="KOG3013">
    <property type="taxonomic scope" value="Eukaryota"/>
</dbReference>
<dbReference type="GeneTree" id="ENSGT00940000153596"/>
<dbReference type="InParanoid" id="Q13868"/>
<dbReference type="OMA" id="GVNGFIW"/>
<dbReference type="OrthoDB" id="1650at2759"/>
<dbReference type="PAN-GO" id="Q13868">
    <property type="GO annotations" value="11 GO annotations based on evolutionary models"/>
</dbReference>
<dbReference type="PhylomeDB" id="Q13868"/>
<dbReference type="TreeFam" id="TF105623"/>
<dbReference type="PathwayCommons" id="Q13868"/>
<dbReference type="Reactome" id="R-HSA-380994">
    <property type="pathway name" value="ATF4 activates genes in response to endoplasmic reticulum stress"/>
</dbReference>
<dbReference type="Reactome" id="R-HSA-429958">
    <property type="pathway name" value="mRNA decay by 3' to 5' exoribonuclease"/>
</dbReference>
<dbReference type="Reactome" id="R-HSA-450385">
    <property type="pathway name" value="Butyrate Response Factor 1 (BRF1) binds and destabilizes mRNA"/>
</dbReference>
<dbReference type="Reactome" id="R-HSA-450513">
    <property type="pathway name" value="Tristetraprolin (TTP, ZFP36) binds and destabilizes mRNA"/>
</dbReference>
<dbReference type="Reactome" id="R-HSA-450604">
    <property type="pathway name" value="KSRP (KHSRP) binds and destabilizes mRNA"/>
</dbReference>
<dbReference type="Reactome" id="R-HSA-6791226">
    <property type="pathway name" value="Major pathway of rRNA processing in the nucleolus and cytosol"/>
</dbReference>
<dbReference type="SignaLink" id="Q13868"/>
<dbReference type="SIGNOR" id="Q13868"/>
<dbReference type="BioGRID-ORCS" id="23404">
    <property type="hits" value="806 hits in 1172 CRISPR screens"/>
</dbReference>
<dbReference type="CD-CODE" id="91857CE7">
    <property type="entry name" value="Nucleolus"/>
</dbReference>
<dbReference type="ChiTaRS" id="EXOSC2">
    <property type="organism name" value="human"/>
</dbReference>
<dbReference type="EvolutionaryTrace" id="Q13868"/>
<dbReference type="GeneWiki" id="Exosome_component_2"/>
<dbReference type="GenomeRNAi" id="23404"/>
<dbReference type="Pharos" id="Q13868">
    <property type="development level" value="Tbio"/>
</dbReference>
<dbReference type="PRO" id="PR:Q13868"/>
<dbReference type="Proteomes" id="UP000005640">
    <property type="component" value="Chromosome 9"/>
</dbReference>
<dbReference type="RNAct" id="Q13868">
    <property type="molecule type" value="protein"/>
</dbReference>
<dbReference type="Bgee" id="ENSG00000130713">
    <property type="expression patterns" value="Expressed in ganglionic eminence and 171 other cell types or tissues"/>
</dbReference>
<dbReference type="ExpressionAtlas" id="Q13868">
    <property type="expression patterns" value="baseline and differential"/>
</dbReference>
<dbReference type="GO" id="GO:0005737">
    <property type="term" value="C:cytoplasm"/>
    <property type="evidence" value="ECO:0000314"/>
    <property type="project" value="UniProtKB"/>
</dbReference>
<dbReference type="GO" id="GO:0000177">
    <property type="term" value="C:cytoplasmic exosome (RNase complex)"/>
    <property type="evidence" value="ECO:0000318"/>
    <property type="project" value="GO_Central"/>
</dbReference>
<dbReference type="GO" id="GO:0005829">
    <property type="term" value="C:cytosol"/>
    <property type="evidence" value="ECO:0000314"/>
    <property type="project" value="ComplexPortal"/>
</dbReference>
<dbReference type="GO" id="GO:0000178">
    <property type="term" value="C:exosome (RNase complex)"/>
    <property type="evidence" value="ECO:0000314"/>
    <property type="project" value="UniProtKB"/>
</dbReference>
<dbReference type="GO" id="GO:0000176">
    <property type="term" value="C:nuclear exosome (RNase complex)"/>
    <property type="evidence" value="ECO:0000314"/>
    <property type="project" value="UniProtKB"/>
</dbReference>
<dbReference type="GO" id="GO:0101019">
    <property type="term" value="C:nucleolar exosome (RNase complex)"/>
    <property type="evidence" value="ECO:0000303"/>
    <property type="project" value="ComplexPortal"/>
</dbReference>
<dbReference type="GO" id="GO:0005730">
    <property type="term" value="C:nucleolus"/>
    <property type="evidence" value="ECO:0000314"/>
    <property type="project" value="HPA"/>
</dbReference>
<dbReference type="GO" id="GO:0005654">
    <property type="term" value="C:nucleoplasm"/>
    <property type="evidence" value="ECO:0000314"/>
    <property type="project" value="HPA"/>
</dbReference>
<dbReference type="GO" id="GO:0005634">
    <property type="term" value="C:nucleus"/>
    <property type="evidence" value="ECO:0000314"/>
    <property type="project" value="UniProtKB"/>
</dbReference>
<dbReference type="GO" id="GO:0000175">
    <property type="term" value="F:3'-5'-RNA exonuclease activity"/>
    <property type="evidence" value="ECO:0000304"/>
    <property type="project" value="ProtInc"/>
</dbReference>
<dbReference type="GO" id="GO:0008312">
    <property type="term" value="F:7S RNA binding"/>
    <property type="evidence" value="ECO:0000304"/>
    <property type="project" value="ProtInc"/>
</dbReference>
<dbReference type="GO" id="GO:0003723">
    <property type="term" value="F:RNA binding"/>
    <property type="evidence" value="ECO:0000318"/>
    <property type="project" value="GO_Central"/>
</dbReference>
<dbReference type="GO" id="GO:0071034">
    <property type="term" value="P:CUT catabolic process"/>
    <property type="evidence" value="ECO:0000318"/>
    <property type="project" value="GO_Central"/>
</dbReference>
<dbReference type="GO" id="GO:0000467">
    <property type="term" value="P:exonucleolytic trimming to generate mature 3'-end of 5.8S rRNA from tricistronic rRNA transcript (SSU-rRNA, 5.8S rRNA, LSU-rRNA)"/>
    <property type="evidence" value="ECO:0000318"/>
    <property type="project" value="GO_Central"/>
</dbReference>
<dbReference type="GO" id="GO:0071035">
    <property type="term" value="P:nuclear polyadenylation-dependent rRNA catabolic process"/>
    <property type="evidence" value="ECO:0000318"/>
    <property type="project" value="GO_Central"/>
</dbReference>
<dbReference type="GO" id="GO:0000956">
    <property type="term" value="P:nuclear-transcribed mRNA catabolic process"/>
    <property type="evidence" value="ECO:0000318"/>
    <property type="project" value="GO_Central"/>
</dbReference>
<dbReference type="GO" id="GO:0071051">
    <property type="term" value="P:poly(A)-dependent snoRNA 3'-end processing"/>
    <property type="evidence" value="ECO:0000318"/>
    <property type="project" value="GO_Central"/>
</dbReference>
<dbReference type="GO" id="GO:0030307">
    <property type="term" value="P:positive regulation of cell growth"/>
    <property type="evidence" value="ECO:0000315"/>
    <property type="project" value="UniProtKB"/>
</dbReference>
<dbReference type="GO" id="GO:0006401">
    <property type="term" value="P:RNA catabolic process"/>
    <property type="evidence" value="ECO:0000314"/>
    <property type="project" value="ComplexPortal"/>
</dbReference>
<dbReference type="GO" id="GO:0006396">
    <property type="term" value="P:RNA processing"/>
    <property type="evidence" value="ECO:0000314"/>
    <property type="project" value="ComplexPortal"/>
</dbReference>
<dbReference type="GO" id="GO:0006364">
    <property type="term" value="P:rRNA processing"/>
    <property type="evidence" value="ECO:0000304"/>
    <property type="project" value="ProtInc"/>
</dbReference>
<dbReference type="GO" id="GO:0071038">
    <property type="term" value="P:TRAMP-dependent tRNA surveillance pathway"/>
    <property type="evidence" value="ECO:0000318"/>
    <property type="project" value="GO_Central"/>
</dbReference>
<dbReference type="GO" id="GO:0034475">
    <property type="term" value="P:U4 snRNA 3'-end processing"/>
    <property type="evidence" value="ECO:0000318"/>
    <property type="project" value="GO_Central"/>
</dbReference>
<dbReference type="CDD" id="cd22525">
    <property type="entry name" value="KH-I_Rrp4_eukar"/>
    <property type="match status" value="1"/>
</dbReference>
<dbReference type="CDD" id="cd05789">
    <property type="entry name" value="S1_Rrp4"/>
    <property type="match status" value="1"/>
</dbReference>
<dbReference type="FunFam" id="2.40.50.100:FF:000022">
    <property type="entry name" value="Exosome complex component RRP4"/>
    <property type="match status" value="1"/>
</dbReference>
<dbReference type="FunFam" id="2.40.50.140:FF:000038">
    <property type="entry name" value="Exosome complex component RRP4"/>
    <property type="match status" value="1"/>
</dbReference>
<dbReference type="Gene3D" id="2.40.50.100">
    <property type="match status" value="1"/>
</dbReference>
<dbReference type="Gene3D" id="2.40.50.140">
    <property type="entry name" value="Nucleic acid-binding proteins"/>
    <property type="match status" value="1"/>
</dbReference>
<dbReference type="InterPro" id="IPR025721">
    <property type="entry name" value="Exosome_cplx_N_dom"/>
</dbReference>
<dbReference type="InterPro" id="IPR026699">
    <property type="entry name" value="Exosome_RNA_bind1/RRP40/RRP4"/>
</dbReference>
<dbReference type="InterPro" id="IPR004088">
    <property type="entry name" value="KH_dom_type_1"/>
</dbReference>
<dbReference type="InterPro" id="IPR036612">
    <property type="entry name" value="KH_dom_type_1_sf"/>
</dbReference>
<dbReference type="InterPro" id="IPR012340">
    <property type="entry name" value="NA-bd_OB-fold"/>
</dbReference>
<dbReference type="InterPro" id="IPR048565">
    <property type="entry name" value="RRP4_S1"/>
</dbReference>
<dbReference type="PANTHER" id="PTHR21321:SF4">
    <property type="entry name" value="EXOSOME COMPLEX COMPONENT RRP4"/>
    <property type="match status" value="1"/>
</dbReference>
<dbReference type="PANTHER" id="PTHR21321">
    <property type="entry name" value="PNAS-3 RELATED"/>
    <property type="match status" value="1"/>
</dbReference>
<dbReference type="Pfam" id="PF14382">
    <property type="entry name" value="ECR1_N"/>
    <property type="match status" value="1"/>
</dbReference>
<dbReference type="Pfam" id="PF15985">
    <property type="entry name" value="KH_6"/>
    <property type="match status" value="1"/>
</dbReference>
<dbReference type="Pfam" id="PF21266">
    <property type="entry name" value="RRP4_S1"/>
    <property type="match status" value="1"/>
</dbReference>
<dbReference type="SUPFAM" id="SSF54791">
    <property type="entry name" value="Eukaryotic type KH-domain (KH-domain type I)"/>
    <property type="match status" value="1"/>
</dbReference>
<dbReference type="SUPFAM" id="SSF50249">
    <property type="entry name" value="Nucleic acid-binding proteins"/>
    <property type="match status" value="1"/>
</dbReference>
<dbReference type="SUPFAM" id="SSF110324">
    <property type="entry name" value="Ribosomal L27 protein-like"/>
    <property type="match status" value="1"/>
</dbReference>
<reference key="1">
    <citation type="thesis" date="1994" institute="University of Oklahoma" country="United States">
        <title>Sequence of the human abl and bcr genes.</title>
        <authorList>
            <person name="Chissoe S.L."/>
        </authorList>
    </citation>
    <scope>NUCLEOTIDE SEQUENCE [GENOMIC DNA]</scope>
    <source>
        <tissue>Lung carcinoma</tissue>
    </source>
</reference>
<reference key="2">
    <citation type="journal article" date="1997" name="Cell">
        <title>The exosome: a conserved eukaryotic RNA processing complex containing multiple 3'--&gt;5' exoribonucleases.</title>
        <authorList>
            <person name="Mitchell P."/>
            <person name="Petfalski E."/>
            <person name="Shevchenko A."/>
            <person name="Mann M."/>
            <person name="Tollervey D."/>
        </authorList>
    </citation>
    <scope>NUCLEOTIDE SEQUENCE [MRNA] (ISOFORM 1)</scope>
    <scope>SEQUENCE REVISION</scope>
    <source>
        <tissue>Cervix adenocarcinoma</tissue>
    </source>
</reference>
<reference key="3">
    <citation type="journal article" date="2004" name="Nat. Genet.">
        <title>Complete sequencing and characterization of 21,243 full-length human cDNAs.</title>
        <authorList>
            <person name="Ota T."/>
            <person name="Suzuki Y."/>
            <person name="Nishikawa T."/>
            <person name="Otsuki T."/>
            <person name="Sugiyama T."/>
            <person name="Irie R."/>
            <person name="Wakamatsu A."/>
            <person name="Hayashi K."/>
            <person name="Sato H."/>
            <person name="Nagai K."/>
            <person name="Kimura K."/>
            <person name="Makita H."/>
            <person name="Sekine M."/>
            <person name="Obayashi M."/>
            <person name="Nishi T."/>
            <person name="Shibahara T."/>
            <person name="Tanaka T."/>
            <person name="Ishii S."/>
            <person name="Yamamoto J."/>
            <person name="Saito K."/>
            <person name="Kawai Y."/>
            <person name="Isono Y."/>
            <person name="Nakamura Y."/>
            <person name="Nagahari K."/>
            <person name="Murakami K."/>
            <person name="Yasuda T."/>
            <person name="Iwayanagi T."/>
            <person name="Wagatsuma M."/>
            <person name="Shiratori A."/>
            <person name="Sudo H."/>
            <person name="Hosoiri T."/>
            <person name="Kaku Y."/>
            <person name="Kodaira H."/>
            <person name="Kondo H."/>
            <person name="Sugawara M."/>
            <person name="Takahashi M."/>
            <person name="Kanda K."/>
            <person name="Yokoi T."/>
            <person name="Furuya T."/>
            <person name="Kikkawa E."/>
            <person name="Omura Y."/>
            <person name="Abe K."/>
            <person name="Kamihara K."/>
            <person name="Katsuta N."/>
            <person name="Sato K."/>
            <person name="Tanikawa M."/>
            <person name="Yamazaki M."/>
            <person name="Ninomiya K."/>
            <person name="Ishibashi T."/>
            <person name="Yamashita H."/>
            <person name="Murakawa K."/>
            <person name="Fujimori K."/>
            <person name="Tanai H."/>
            <person name="Kimata M."/>
            <person name="Watanabe M."/>
            <person name="Hiraoka S."/>
            <person name="Chiba Y."/>
            <person name="Ishida S."/>
            <person name="Ono Y."/>
            <person name="Takiguchi S."/>
            <person name="Watanabe S."/>
            <person name="Yosida M."/>
            <person name="Hotuta T."/>
            <person name="Kusano J."/>
            <person name="Kanehori K."/>
            <person name="Takahashi-Fujii A."/>
            <person name="Hara H."/>
            <person name="Tanase T.-O."/>
            <person name="Nomura Y."/>
            <person name="Togiya S."/>
            <person name="Komai F."/>
            <person name="Hara R."/>
            <person name="Takeuchi K."/>
            <person name="Arita M."/>
            <person name="Imose N."/>
            <person name="Musashino K."/>
            <person name="Yuuki H."/>
            <person name="Oshima A."/>
            <person name="Sasaki N."/>
            <person name="Aotsuka S."/>
            <person name="Yoshikawa Y."/>
            <person name="Matsunawa H."/>
            <person name="Ichihara T."/>
            <person name="Shiohata N."/>
            <person name="Sano S."/>
            <person name="Moriya S."/>
            <person name="Momiyama H."/>
            <person name="Satoh N."/>
            <person name="Takami S."/>
            <person name="Terashima Y."/>
            <person name="Suzuki O."/>
            <person name="Nakagawa S."/>
            <person name="Senoh A."/>
            <person name="Mizoguchi H."/>
            <person name="Goto Y."/>
            <person name="Shimizu F."/>
            <person name="Wakebe H."/>
            <person name="Hishigaki H."/>
            <person name="Watanabe T."/>
            <person name="Sugiyama A."/>
            <person name="Takemoto M."/>
            <person name="Kawakami B."/>
            <person name="Yamazaki M."/>
            <person name="Watanabe K."/>
            <person name="Kumagai A."/>
            <person name="Itakura S."/>
            <person name="Fukuzumi Y."/>
            <person name="Fujimori Y."/>
            <person name="Komiyama M."/>
            <person name="Tashiro H."/>
            <person name="Tanigami A."/>
            <person name="Fujiwara T."/>
            <person name="Ono T."/>
            <person name="Yamada K."/>
            <person name="Fujii Y."/>
            <person name="Ozaki K."/>
            <person name="Hirao M."/>
            <person name="Ohmori Y."/>
            <person name="Kawabata A."/>
            <person name="Hikiji T."/>
            <person name="Kobatake N."/>
            <person name="Inagaki H."/>
            <person name="Ikema Y."/>
            <person name="Okamoto S."/>
            <person name="Okitani R."/>
            <person name="Kawakami T."/>
            <person name="Noguchi S."/>
            <person name="Itoh T."/>
            <person name="Shigeta K."/>
            <person name="Senba T."/>
            <person name="Matsumura K."/>
            <person name="Nakajima Y."/>
            <person name="Mizuno T."/>
            <person name="Morinaga M."/>
            <person name="Sasaki M."/>
            <person name="Togashi T."/>
            <person name="Oyama M."/>
            <person name="Hata H."/>
            <person name="Watanabe M."/>
            <person name="Komatsu T."/>
            <person name="Mizushima-Sugano J."/>
            <person name="Satoh T."/>
            <person name="Shirai Y."/>
            <person name="Takahashi Y."/>
            <person name="Nakagawa K."/>
            <person name="Okumura K."/>
            <person name="Nagase T."/>
            <person name="Nomura N."/>
            <person name="Kikuchi H."/>
            <person name="Masuho Y."/>
            <person name="Yamashita R."/>
            <person name="Nakai K."/>
            <person name="Yada T."/>
            <person name="Nakamura Y."/>
            <person name="Ohara O."/>
            <person name="Isogai T."/>
            <person name="Sugano S."/>
        </authorList>
    </citation>
    <scope>NUCLEOTIDE SEQUENCE [LARGE SCALE MRNA] (ISOFORMS 1 AND 2)</scope>
    <source>
        <tissue>Colon</tissue>
        <tissue>Mammary gland</tissue>
        <tissue>Placenta</tissue>
    </source>
</reference>
<reference key="4">
    <citation type="journal article" date="2004" name="Nature">
        <title>DNA sequence and analysis of human chromosome 9.</title>
        <authorList>
            <person name="Humphray S.J."/>
            <person name="Oliver K."/>
            <person name="Hunt A.R."/>
            <person name="Plumb R.W."/>
            <person name="Loveland J.E."/>
            <person name="Howe K.L."/>
            <person name="Andrews T.D."/>
            <person name="Searle S."/>
            <person name="Hunt S.E."/>
            <person name="Scott C.E."/>
            <person name="Jones M.C."/>
            <person name="Ainscough R."/>
            <person name="Almeida J.P."/>
            <person name="Ambrose K.D."/>
            <person name="Ashwell R.I.S."/>
            <person name="Babbage A.K."/>
            <person name="Babbage S."/>
            <person name="Bagguley C.L."/>
            <person name="Bailey J."/>
            <person name="Banerjee R."/>
            <person name="Barker D.J."/>
            <person name="Barlow K.F."/>
            <person name="Bates K."/>
            <person name="Beasley H."/>
            <person name="Beasley O."/>
            <person name="Bird C.P."/>
            <person name="Bray-Allen S."/>
            <person name="Brown A.J."/>
            <person name="Brown J.Y."/>
            <person name="Burford D."/>
            <person name="Burrill W."/>
            <person name="Burton J."/>
            <person name="Carder C."/>
            <person name="Carter N.P."/>
            <person name="Chapman J.C."/>
            <person name="Chen Y."/>
            <person name="Clarke G."/>
            <person name="Clark S.Y."/>
            <person name="Clee C.M."/>
            <person name="Clegg S."/>
            <person name="Collier R.E."/>
            <person name="Corby N."/>
            <person name="Crosier M."/>
            <person name="Cummings A.T."/>
            <person name="Davies J."/>
            <person name="Dhami P."/>
            <person name="Dunn M."/>
            <person name="Dutta I."/>
            <person name="Dyer L.W."/>
            <person name="Earthrowl M.E."/>
            <person name="Faulkner L."/>
            <person name="Fleming C.J."/>
            <person name="Frankish A."/>
            <person name="Frankland J.A."/>
            <person name="French L."/>
            <person name="Fricker D.G."/>
            <person name="Garner P."/>
            <person name="Garnett J."/>
            <person name="Ghori J."/>
            <person name="Gilbert J.G.R."/>
            <person name="Glison C."/>
            <person name="Grafham D.V."/>
            <person name="Gribble S."/>
            <person name="Griffiths C."/>
            <person name="Griffiths-Jones S."/>
            <person name="Grocock R."/>
            <person name="Guy J."/>
            <person name="Hall R.E."/>
            <person name="Hammond S."/>
            <person name="Harley J.L."/>
            <person name="Harrison E.S.I."/>
            <person name="Hart E.A."/>
            <person name="Heath P.D."/>
            <person name="Henderson C.D."/>
            <person name="Hopkins B.L."/>
            <person name="Howard P.J."/>
            <person name="Howden P.J."/>
            <person name="Huckle E."/>
            <person name="Johnson C."/>
            <person name="Johnson D."/>
            <person name="Joy A.A."/>
            <person name="Kay M."/>
            <person name="Keenan S."/>
            <person name="Kershaw J.K."/>
            <person name="Kimberley A.M."/>
            <person name="King A."/>
            <person name="Knights A."/>
            <person name="Laird G.K."/>
            <person name="Langford C."/>
            <person name="Lawlor S."/>
            <person name="Leongamornlert D.A."/>
            <person name="Leversha M."/>
            <person name="Lloyd C."/>
            <person name="Lloyd D.M."/>
            <person name="Lovell J."/>
            <person name="Martin S."/>
            <person name="Mashreghi-Mohammadi M."/>
            <person name="Matthews L."/>
            <person name="McLaren S."/>
            <person name="McLay K.E."/>
            <person name="McMurray A."/>
            <person name="Milne S."/>
            <person name="Nickerson T."/>
            <person name="Nisbett J."/>
            <person name="Nordsiek G."/>
            <person name="Pearce A.V."/>
            <person name="Peck A.I."/>
            <person name="Porter K.M."/>
            <person name="Pandian R."/>
            <person name="Pelan S."/>
            <person name="Phillimore B."/>
            <person name="Povey S."/>
            <person name="Ramsey Y."/>
            <person name="Rand V."/>
            <person name="Scharfe M."/>
            <person name="Sehra H.K."/>
            <person name="Shownkeen R."/>
            <person name="Sims S.K."/>
            <person name="Skuce C.D."/>
            <person name="Smith M."/>
            <person name="Steward C.A."/>
            <person name="Swarbreck D."/>
            <person name="Sycamore N."/>
            <person name="Tester J."/>
            <person name="Thorpe A."/>
            <person name="Tracey A."/>
            <person name="Tromans A."/>
            <person name="Thomas D.W."/>
            <person name="Wall M."/>
            <person name="Wallis J.M."/>
            <person name="West A.P."/>
            <person name="Whitehead S.L."/>
            <person name="Willey D.L."/>
            <person name="Williams S.A."/>
            <person name="Wilming L."/>
            <person name="Wray P.W."/>
            <person name="Young L."/>
            <person name="Ashurst J.L."/>
            <person name="Coulson A."/>
            <person name="Blocker H."/>
            <person name="Durbin R.M."/>
            <person name="Sulston J.E."/>
            <person name="Hubbard T."/>
            <person name="Jackson M.J."/>
            <person name="Bentley D.R."/>
            <person name="Beck S."/>
            <person name="Rogers J."/>
            <person name="Dunham I."/>
        </authorList>
    </citation>
    <scope>NUCLEOTIDE SEQUENCE [LARGE SCALE GENOMIC DNA]</scope>
</reference>
<reference key="5">
    <citation type="submission" date="2005-07" db="EMBL/GenBank/DDBJ databases">
        <authorList>
            <person name="Mural R.J."/>
            <person name="Istrail S."/>
            <person name="Sutton G.G."/>
            <person name="Florea L."/>
            <person name="Halpern A.L."/>
            <person name="Mobarry C.M."/>
            <person name="Lippert R."/>
            <person name="Walenz B."/>
            <person name="Shatkay H."/>
            <person name="Dew I."/>
            <person name="Miller J.R."/>
            <person name="Flanigan M.J."/>
            <person name="Edwards N.J."/>
            <person name="Bolanos R."/>
            <person name="Fasulo D."/>
            <person name="Halldorsson B.V."/>
            <person name="Hannenhalli S."/>
            <person name="Turner R."/>
            <person name="Yooseph S."/>
            <person name="Lu F."/>
            <person name="Nusskern D.R."/>
            <person name="Shue B.C."/>
            <person name="Zheng X.H."/>
            <person name="Zhong F."/>
            <person name="Delcher A.L."/>
            <person name="Huson D.H."/>
            <person name="Kravitz S.A."/>
            <person name="Mouchard L."/>
            <person name="Reinert K."/>
            <person name="Remington K.A."/>
            <person name="Clark A.G."/>
            <person name="Waterman M.S."/>
            <person name="Eichler E.E."/>
            <person name="Adams M.D."/>
            <person name="Hunkapiller M.W."/>
            <person name="Myers E.W."/>
            <person name="Venter J.C."/>
        </authorList>
    </citation>
    <scope>NUCLEOTIDE SEQUENCE [LARGE SCALE GENOMIC DNA]</scope>
</reference>
<reference key="6">
    <citation type="journal article" date="2004" name="Genome Res.">
        <title>The status, quality, and expansion of the NIH full-length cDNA project: the Mammalian Gene Collection (MGC).</title>
        <authorList>
            <consortium name="The MGC Project Team"/>
        </authorList>
    </citation>
    <scope>NUCLEOTIDE SEQUENCE [LARGE SCALE MRNA] (ISOFORM 1)</scope>
    <source>
        <tissue>Lung</tissue>
    </source>
</reference>
<reference key="7">
    <citation type="journal article" date="1996" name="Genes Dev.">
        <title>The 3' end of yeast 5.8S rRNA is generated by an exonuclease processing mechanism.</title>
        <authorList>
            <person name="Mitchell P."/>
            <person name="Petfalski E."/>
            <person name="Tollervey D."/>
        </authorList>
    </citation>
    <scope>CHARACTERIZATION</scope>
</reference>
<reference key="8">
    <citation type="journal article" date="1999" name="Genes Dev.">
        <title>The yeast exosome and human PM-Scl are related complexes of 3'--&gt;5' exonucleases.</title>
        <authorList>
            <person name="Allmang C."/>
            <person name="Petfalski E."/>
            <person name="Podtelejnikov A."/>
            <person name="Mann M."/>
            <person name="Tollervey D."/>
            <person name="Mitchell P."/>
        </authorList>
    </citation>
    <scope>CHARACTERIZATION</scope>
</reference>
<reference key="9">
    <citation type="journal article" date="2001" name="Cell">
        <title>AU binding proteins recruit the exosome to degrade ARE-containing mRNAs.</title>
        <authorList>
            <person name="Chen C.-Y."/>
            <person name="Gherzi R."/>
            <person name="Ong S.-E."/>
            <person name="Chan E.L."/>
            <person name="Raijmakers R."/>
            <person name="Pruijn G.J.M."/>
            <person name="Stoecklin G."/>
            <person name="Moroni C."/>
            <person name="Mann M."/>
            <person name="Karin M."/>
        </authorList>
    </citation>
    <scope>IDENTIFICATION BY MASS SPECTROMETRY</scope>
    <scope>IDENTIFICATION IN THE RNA EXOSOME CORE COMPLEX</scope>
    <scope>PROTEIN INTERACTION</scope>
</reference>
<reference key="10">
    <citation type="journal article" date="2005" name="Genes Dev.">
        <title>Recruitment and activation of mRNA decay enzymes by two ARE-mediated decay activation domains in the proteins TTP and BRF-1.</title>
        <authorList>
            <person name="Lykke-Andersen J."/>
            <person name="Wagner E."/>
        </authorList>
    </citation>
    <scope>INTERACTION WITH ZFP36L1</scope>
</reference>
<reference key="11">
    <citation type="journal article" date="2007" name="RNA">
        <title>Human cell growth requires a functional cytoplasmic exosome, which is involved in various mRNA decay pathways.</title>
        <authorList>
            <person name="van Dijk E.L."/>
            <person name="Schilders G."/>
            <person name="Pruijn G.J."/>
        </authorList>
    </citation>
    <scope>FUNCTION IN MRNA DEGRADATION</scope>
    <scope>SUBCELLULAR LOCATION</scope>
</reference>
<reference key="12">
    <citation type="journal article" date="2008" name="Proc. Natl. Acad. Sci. U.S.A.">
        <title>A quantitative atlas of mitotic phosphorylation.</title>
        <authorList>
            <person name="Dephoure N."/>
            <person name="Zhou C."/>
            <person name="Villen J."/>
            <person name="Beausoleil S.A."/>
            <person name="Bakalarski C.E."/>
            <person name="Elledge S.J."/>
            <person name="Gygi S.P."/>
        </authorList>
    </citation>
    <scope>IDENTIFICATION BY MASS SPECTROMETRY [LARGE SCALE ANALYSIS]</scope>
    <source>
        <tissue>Cervix carcinoma</tissue>
    </source>
</reference>
<reference key="13">
    <citation type="journal article" date="2009" name="Anal. Chem.">
        <title>Lys-N and trypsin cover complementary parts of the phosphoproteome in a refined SCX-based approach.</title>
        <authorList>
            <person name="Gauci S."/>
            <person name="Helbig A.O."/>
            <person name="Slijper M."/>
            <person name="Krijgsveld J."/>
            <person name="Heck A.J."/>
            <person name="Mohammed S."/>
        </authorList>
    </citation>
    <scope>IDENTIFICATION BY MASS SPECTROMETRY [LARGE SCALE ANALYSIS]</scope>
</reference>
<reference key="14">
    <citation type="journal article" date="2009" name="Sci. Signal.">
        <title>Quantitative phosphoproteomic analysis of T cell receptor signaling reveals system-wide modulation of protein-protein interactions.</title>
        <authorList>
            <person name="Mayya V."/>
            <person name="Lundgren D.H."/>
            <person name="Hwang S.-I."/>
            <person name="Rezaul K."/>
            <person name="Wu L."/>
            <person name="Eng J.K."/>
            <person name="Rodionov V."/>
            <person name="Han D.K."/>
        </authorList>
    </citation>
    <scope>PHOSPHORYLATION [LARGE SCALE ANALYSIS] AT SER-124</scope>
    <scope>IDENTIFICATION BY MASS SPECTROMETRY [LARGE SCALE ANALYSIS]</scope>
    <source>
        <tissue>Leukemic T-cell</tissue>
    </source>
</reference>
<reference key="15">
    <citation type="journal article" date="2010" name="EMBO J.">
        <title>Dis3-like 1: a novel exoribonuclease associated with the human exosome.</title>
        <authorList>
            <person name="Staals R.H."/>
            <person name="Bronkhorst A.W."/>
            <person name="Schilders G."/>
            <person name="Slomovic S."/>
            <person name="Schuster G."/>
            <person name="Heck A.J."/>
            <person name="Raijmakers R."/>
            <person name="Pruijn G.J."/>
        </authorList>
    </citation>
    <scope>IDENTIFICATION IN THE RNA EXOSOME COMPLEX</scope>
    <scope>IDENTIFICATION BY MASS SPECTROMETRY</scope>
    <scope>SUBCELLULAR LOCATION</scope>
    <scope>INTERACTION WITH DIS3</scope>
</reference>
<reference key="16">
    <citation type="journal article" date="2010" name="Sci. Signal.">
        <title>Quantitative phosphoproteomics reveals widespread full phosphorylation site occupancy during mitosis.</title>
        <authorList>
            <person name="Olsen J.V."/>
            <person name="Vermeulen M."/>
            <person name="Santamaria A."/>
            <person name="Kumar C."/>
            <person name="Miller M.L."/>
            <person name="Jensen L.J."/>
            <person name="Gnad F."/>
            <person name="Cox J."/>
            <person name="Jensen T.S."/>
            <person name="Nigg E.A."/>
            <person name="Brunak S."/>
            <person name="Mann M."/>
        </authorList>
    </citation>
    <scope>PHOSPHORYLATION [LARGE SCALE ANALYSIS] AT SER-124</scope>
    <scope>IDENTIFICATION BY MASS SPECTROMETRY [LARGE SCALE ANALYSIS]</scope>
    <source>
        <tissue>Cervix carcinoma</tissue>
    </source>
</reference>
<reference key="17">
    <citation type="journal article" date="2011" name="BMC Syst. Biol.">
        <title>Initial characterization of the human central proteome.</title>
        <authorList>
            <person name="Burkard T.R."/>
            <person name="Planyavsky M."/>
            <person name="Kaupe I."/>
            <person name="Breitwieser F.P."/>
            <person name="Buerckstuemmer T."/>
            <person name="Bennett K.L."/>
            <person name="Superti-Furga G."/>
            <person name="Colinge J."/>
        </authorList>
    </citation>
    <scope>IDENTIFICATION BY MASS SPECTROMETRY [LARGE SCALE ANALYSIS]</scope>
</reference>
<reference key="18">
    <citation type="journal article" date="2011" name="FASEB J.">
        <title>Modulation of exosome-mediated mRNA turnover by interaction of GTP-binding protein 1 (GTPBP1) with its target mRNAs.</title>
        <authorList>
            <person name="Woo K.C."/>
            <person name="Kim T.D."/>
            <person name="Lee K.H."/>
            <person name="Kim D.Y."/>
            <person name="Kim S."/>
            <person name="Lee H.R."/>
            <person name="Kang H.J."/>
            <person name="Chung S.J."/>
            <person name="Senju S."/>
            <person name="Nishimura Y."/>
            <person name="Kim K.T."/>
        </authorList>
    </citation>
    <scope>INTERACTION WITH GTPBP1</scope>
</reference>
<reference key="19">
    <citation type="journal article" date="2013" name="J. Proteome Res.">
        <title>Toward a comprehensive characterization of a human cancer cell phosphoproteome.</title>
        <authorList>
            <person name="Zhou H."/>
            <person name="Di Palma S."/>
            <person name="Preisinger C."/>
            <person name="Peng M."/>
            <person name="Polat A.N."/>
            <person name="Heck A.J."/>
            <person name="Mohammed S."/>
        </authorList>
    </citation>
    <scope>PHOSPHORYLATION [LARGE SCALE ANALYSIS] AT SER-124</scope>
    <scope>IDENTIFICATION BY MASS SPECTROMETRY [LARGE SCALE ANALYSIS]</scope>
    <source>
        <tissue>Cervix carcinoma</tissue>
        <tissue>Erythroleukemia</tissue>
    </source>
</reference>
<reference key="20">
    <citation type="journal article" date="2015" name="Biochem. Biophys. Res. Commun.">
        <title>NVL2, a nucleolar AAA-ATPase, is associated with the nuclear exosome and is involved in pre-rRNA processing.</title>
        <authorList>
            <person name="Yoshikatsu Y."/>
            <person name="Ishida Y."/>
            <person name="Sudo H."/>
            <person name="Yuasa K."/>
            <person name="Tsuji A."/>
            <person name="Nagahama M."/>
        </authorList>
    </citation>
    <scope>IDENTIFICATION IN THE RNA EXOSOME COMPLEX</scope>
</reference>
<reference key="21">
    <citation type="journal article" date="2016" name="J. Med. Genet.">
        <title>Mutations in EXOSC2 are associated with a novel syndrome characterised by retinitis pigmentosa, progressive hearing loss, premature ageing, short stature, mild intellectual disability and distinctive gestalt.</title>
        <authorList>
            <person name="Di Donato N."/>
            <person name="Neuhann T."/>
            <person name="Kahlert A.K."/>
            <person name="Klink B."/>
            <person name="Hackmann K."/>
            <person name="Neuhann I."/>
            <person name="Novotna B."/>
            <person name="Schallner J."/>
            <person name="Krause C."/>
            <person name="Glass I.A."/>
            <person name="Parnell S.E."/>
            <person name="Benet-Pages A."/>
            <person name="Nissen A.M."/>
            <person name="Berger W."/>
            <person name="Altmueller J."/>
            <person name="Thiele H."/>
            <person name="Weber B.H."/>
            <person name="Schrock E."/>
            <person name="Dobyns W.B."/>
            <person name="Bier A."/>
            <person name="Rump A."/>
        </authorList>
    </citation>
    <scope>INVOLVEMENT IN SHRF</scope>
    <scope>VARIANTS SHRF VAL-30 AND ASP-198</scope>
</reference>
<reference evidence="13" key="22">
    <citation type="journal article" date="2006" name="Cell">
        <title>Reconstitution, activities, and structure of the eukaryotic RNA exosome.</title>
        <authorList>
            <person name="Liu Q."/>
            <person name="Greimann J.C."/>
            <person name="Lima C.D."/>
        </authorList>
    </citation>
    <scope>X-RAY CRYSTALLOGRAPHY (3.35 ANGSTROMS)</scope>
    <scope>RECONSTITUTION OF THE RNA EXOSOME CORE COMPLEX</scope>
</reference>
<reference key="23">
    <citation type="journal article" date="2007" name="Cell">
        <authorList>
            <person name="Liu Q."/>
            <person name="Greimann J.C."/>
            <person name="Lima C.D."/>
        </authorList>
    </citation>
    <scope>ERRATUM OF PUBMED:17174896</scope>
</reference>
<reference evidence="14 15" key="24">
    <citation type="journal article" date="2018" name="Cell">
        <title>Helicase-Dependent RNA Decay Illuminated by a Cryo-EM Structure of a Human Nuclear RNA Exosome-MTR4 Complex.</title>
        <authorList>
            <person name="Weick E.M."/>
            <person name="Puno M.R."/>
            <person name="Januszyk K."/>
            <person name="Zinder J.C."/>
            <person name="DiMattia M.A."/>
            <person name="Lima C.D."/>
        </authorList>
    </citation>
    <scope>STRUCTURE BY ELECTRON MICROSCOPY (3.45 ANGSTROMS)</scope>
    <scope>SUBUNIT</scope>
</reference>
<reference evidence="16" key="25">
    <citation type="journal article" date="2018" name="Elife">
        <title>Distinct and evolutionary conserved structural features of the human nuclear exosome complex.</title>
        <authorList>
            <person name="Gerlach P."/>
            <person name="Schuller J.M."/>
            <person name="Bonneau F."/>
            <person name="Basquin J."/>
            <person name="Reichelt P."/>
            <person name="Falk S."/>
            <person name="Conti E."/>
        </authorList>
    </citation>
    <scope>STRUCTURE BY ELECTRON MICROSCOPY (3.80 ANGSTROMS) OF THE RNA EXOSOME COMPLEX IN COMPLEX WITH MPP6</scope>
    <scope>SUBUNIT</scope>
</reference>
<comment type="function">
    <text evidence="3">Non-catalytic component of the RNA exosome complex which has 3'-&gt;5' exoribonuclease activity and participates in a multitude of cellular RNA processing and degradation events. In the nucleus, the RNA exosome complex is involved in proper maturation of stable RNA species such as rRNA, snRNA and snoRNA, in the elimination of RNA processing by-products and non-coding 'pervasive' transcripts, such as antisense RNA species and promoter-upstream transcripts (PROMPTs), and of mRNAs with processing defects, thereby limiting or excluding their export to the cytoplasm. The RNA exosome may be involved in Ig class switch recombination (CSR) and/or Ig variable region somatic hypermutation (SHM) by targeting AICDA deamination activity to transcribed dsDNA substrates. In the cytoplasm, the RNA exosome complex is involved in general mRNA turnover and specifically degrades inherently unstable mRNAs containing AU-rich elements (AREs) within their 3' untranslated regions, and in RNA surveillance pathways, preventing translation of aberrant mRNAs. It seems to be involved in degradation of histone mRNA. The catalytic inactive RNA exosome core complex of 9 subunits (Exo-9) is proposed to play a pivotal role in the binding and presentation of RNA for ribonucleolysis, and to serve as a scaffold for the association with catalytic subunits and accessory proteins or complexes. EXOSC2 as peripheral part of the Exo-9 complex stabilizes the hexameric ring of RNase PH-domain subunits through contacts with EXOSC4 and EXOSC7.</text>
</comment>
<comment type="subunit">
    <text evidence="1 2 4 5 7 8">Component of the RNA exosome core complex (Exo-9), composed of EXOSC1, EXOSC2, EXOSC3, EXOSC4, EXOSC5, EXOSC6, EXOSC7, EXOSC8 and EXOSC9; within the complex interacts with EXOSC4 and EXOSC7 (PubMed:29906447, PubMed:30047866). The catalytically inactive RNA exosome core complex (Exo-9) associates with the catalytic subunit EXOSC10/RRP6 (PubMed:11719186, PubMed:20531389, PubMed:29906447). Exo-9 may associate with DIS3 to form the nucleolar exosome complex, or DIS3L to form the cytoplasmic exosome complex (PubMed:11719186, PubMed:20531389, PubMed:29906447). Exo-9 is formed by a hexameric base ring consisting of the heterodimers EXOSC4-EXOSC9, EXOSC5-EXOSC8 and EXOSC6-EXOSC7, and a cap ring consisting of EXOSC1, EXOSC2 and EXOSC3 (PubMed:11719186, PubMed:20531389, PubMed:30047866). The RNA exosome complex associates with cofactors C1D/RRP47, MPHOSPH6/MPP6 and MTREX/MTR4 (PubMed:30047866). Interacts with GTPBP1 (PubMed:21515746). Interacts with ZFP36L1 (via N-terminus) (PubMed:15687258).</text>
</comment>
<comment type="interaction">
    <interactant intactId="EBI-301735">
        <id>Q13868</id>
    </interactant>
    <interactant intactId="EBI-373539">
        <id>Q9Y2L1</id>
        <label>DIS3</label>
    </interactant>
    <organismsDiffer>false</organismsDiffer>
    <experiments>3</experiments>
</comment>
<comment type="interaction">
    <interactant intactId="EBI-301735">
        <id>Q13868</id>
    </interactant>
    <interactant intactId="EBI-3895807">
        <id>Q8TF46-1</id>
        <label>DIS3L</label>
    </interactant>
    <organismsDiffer>false</organismsDiffer>
    <experiments>2</experiments>
</comment>
<comment type="interaction">
    <interactant intactId="EBI-301735">
        <id>Q13868</id>
    </interactant>
    <interactant intactId="EBI-371866">
        <id>Q9NQT5</id>
        <label>EXOSC3</label>
    </interactant>
    <organismsDiffer>false</organismsDiffer>
    <experiments>10</experiments>
</comment>
<comment type="interaction">
    <interactant intactId="EBI-301735">
        <id>Q13868</id>
    </interactant>
    <interactant intactId="EBI-371823">
        <id>Q9NPD3</id>
        <label>EXOSC4</label>
    </interactant>
    <organismsDiffer>false</organismsDiffer>
    <experiments>10</experiments>
</comment>
<comment type="interaction">
    <interactant intactId="EBI-301735">
        <id>Q13868</id>
    </interactant>
    <interactant intactId="EBI-371841">
        <id>Q15024</id>
        <label>EXOSC7</label>
    </interactant>
    <organismsDiffer>false</organismsDiffer>
    <experiments>9</experiments>
</comment>
<comment type="interaction">
    <interactant intactId="EBI-301735">
        <id>Q13868</id>
    </interactant>
    <interactant intactId="EBI-373187">
        <id>Q99547</id>
        <label>MPHOSPH6</label>
    </interactant>
    <organismsDiffer>false</organismsDiffer>
    <experiments>6</experiments>
</comment>
<comment type="interaction">
    <interactant intactId="EBI-301735">
        <id>Q13868</id>
    </interactant>
    <interactant intactId="EBI-17181801">
        <id>P0C264</id>
        <label>SBK3</label>
    </interactant>
    <organismsDiffer>false</organismsDiffer>
    <experiments>3</experiments>
</comment>
<comment type="interaction">
    <interactant intactId="EBI-301735">
        <id>Q13868</id>
    </interactant>
    <interactant intactId="EBI-347633">
        <id>Q9H9D4</id>
        <label>ZNF408</label>
    </interactant>
    <organismsDiffer>false</organismsDiffer>
    <experiments>3</experiments>
</comment>
<comment type="subcellular location">
    <subcellularLocation>
        <location>Cytoplasm</location>
    </subcellularLocation>
    <subcellularLocation>
        <location>Nucleus</location>
        <location>Nucleolus</location>
    </subcellularLocation>
    <subcellularLocation>
        <location>Nucleus</location>
    </subcellularLocation>
</comment>
<comment type="alternative products">
    <event type="alternative splicing"/>
    <isoform>
        <id>Q13868-1</id>
        <name>1</name>
        <sequence type="displayed"/>
    </isoform>
    <isoform>
        <id>Q13868-2</id>
        <name>2</name>
        <sequence type="described" ref="VSP_054921"/>
    </isoform>
    <isoform>
        <id>Q13868-3</id>
        <name>3</name>
        <sequence type="described" ref="VSP_057568"/>
    </isoform>
</comment>
<comment type="disease" evidence="6">
    <disease id="DI-05141">
        <name>Short stature, hearing loss, retinitis pigmentosa, and distinctive facies</name>
        <acronym>SHRF</acronym>
        <description>An autosomal recessive disorder characterized by childhood myopia, early onset retinitis pigmentosa, progressive sensorineural hearing loss, hypothyroidism, short stature, brachydactyly, recognisable facial gestalt, premature ageing and mild intellectual disability.</description>
        <dbReference type="MIM" id="617763"/>
    </disease>
    <text>The disease is caused by variants affecting the gene represented in this entry.</text>
</comment>
<comment type="similarity">
    <text evidence="11">Belongs to the RRP4 family.</text>
</comment>
<comment type="sequence caution" evidence="11">
    <conflict type="erroneous gene model prediction">
        <sequence resource="EMBL-CDS" id="AAB60392"/>
    </conflict>
</comment>
<feature type="chain" id="PRO_0000087129" description="Exosome complex component RRP4">
    <location>
        <begin position="1"/>
        <end position="293"/>
    </location>
</feature>
<feature type="domain" description="S1 motif">
    <location>
        <begin position="79"/>
        <end position="159"/>
    </location>
</feature>
<feature type="modified residue" description="Phosphoserine" evidence="17 18 19">
    <location>
        <position position="124"/>
    </location>
</feature>
<feature type="splice variant" id="VSP_057568" description="In isoform 3.">
    <location>
        <begin position="91"/>
        <end position="120"/>
    </location>
</feature>
<feature type="splice variant" id="VSP_054921" description="In isoform 2." evidence="9">
    <location>
        <begin position="143"/>
        <end position="168"/>
    </location>
</feature>
<feature type="sequence variant" id="VAR_080552" description="In SHRF; dbSNP:rs537467155." evidence="6">
    <original>G</original>
    <variation>V</variation>
    <location>
        <position position="30"/>
    </location>
</feature>
<feature type="sequence variant" id="VAR_080553" description="In SHRF; dbSNP:rs756204866." evidence="6">
    <original>G</original>
    <variation>D</variation>
    <location>
        <position position="198"/>
    </location>
</feature>
<feature type="helix" evidence="21">
    <location>
        <begin position="13"/>
        <end position="15"/>
    </location>
</feature>
<feature type="turn" evidence="21">
    <location>
        <begin position="16"/>
        <end position="18"/>
    </location>
</feature>
<feature type="strand" evidence="20">
    <location>
        <begin position="45"/>
        <end position="47"/>
    </location>
</feature>
<feature type="strand" evidence="20">
    <location>
        <begin position="49"/>
        <end position="54"/>
    </location>
</feature>
<feature type="strand" evidence="20">
    <location>
        <begin position="56"/>
        <end position="63"/>
    </location>
</feature>
<feature type="strand" evidence="20">
    <location>
        <begin position="66"/>
        <end position="73"/>
    </location>
</feature>
<feature type="strand" evidence="20">
    <location>
        <begin position="80"/>
        <end position="82"/>
    </location>
</feature>
<feature type="strand" evidence="20">
    <location>
        <begin position="86"/>
        <end position="92"/>
    </location>
</feature>
<feature type="strand" evidence="20">
    <location>
        <begin position="95"/>
        <end position="99"/>
    </location>
</feature>
<feature type="strand" evidence="20">
    <location>
        <begin position="101"/>
        <end position="104"/>
    </location>
</feature>
<feature type="strand" evidence="20">
    <location>
        <begin position="106"/>
        <end position="111"/>
    </location>
</feature>
<feature type="helix" evidence="20">
    <location>
        <begin position="129"/>
        <end position="134"/>
    </location>
</feature>
<feature type="strand" evidence="20">
    <location>
        <begin position="144"/>
        <end position="149"/>
    </location>
</feature>
<feature type="turn" evidence="20">
    <location>
        <begin position="150"/>
        <end position="152"/>
    </location>
</feature>
<feature type="strand" evidence="20">
    <location>
        <begin position="153"/>
        <end position="157"/>
    </location>
</feature>
<feature type="strand" evidence="21">
    <location>
        <begin position="163"/>
        <end position="165"/>
    </location>
</feature>
<feature type="strand" evidence="20">
    <location>
        <begin position="171"/>
        <end position="173"/>
    </location>
</feature>
<feature type="helix" evidence="21">
    <location>
        <begin position="176"/>
        <end position="178"/>
    </location>
</feature>
<feature type="strand" evidence="21">
    <location>
        <begin position="186"/>
        <end position="189"/>
    </location>
</feature>
<feature type="turn" evidence="21">
    <location>
        <begin position="190"/>
        <end position="192"/>
    </location>
</feature>
<feature type="strand" evidence="20">
    <location>
        <begin position="193"/>
        <end position="198"/>
    </location>
</feature>
<feature type="turn" evidence="20">
    <location>
        <begin position="199"/>
        <end position="201"/>
    </location>
</feature>
<feature type="strand" evidence="20">
    <location>
        <begin position="202"/>
        <end position="206"/>
    </location>
</feature>
<feature type="helix" evidence="20">
    <location>
        <begin position="220"/>
        <end position="222"/>
    </location>
</feature>
<feature type="helix" evidence="20">
    <location>
        <begin position="228"/>
        <end position="246"/>
    </location>
</feature>
<feature type="helix" evidence="20">
    <location>
        <begin position="253"/>
        <end position="261"/>
    </location>
</feature>
<feature type="turn" evidence="20">
    <location>
        <begin position="262"/>
        <end position="266"/>
    </location>
</feature>
<feature type="helix" evidence="20">
    <location>
        <begin position="275"/>
        <end position="289"/>
    </location>
</feature>
<feature type="turn" evidence="20">
    <location>
        <begin position="290"/>
        <end position="292"/>
    </location>
</feature>
<protein>
    <recommendedName>
        <fullName evidence="11">Exosome complex component RRP4</fullName>
    </recommendedName>
    <alternativeName>
        <fullName>Exosome component 2</fullName>
    </alternativeName>
    <alternativeName>
        <fullName>Ribosomal RNA-processing protein 4</fullName>
    </alternativeName>
</protein>
<sequence length="293" mass="32789">MAMEMRLPVARKPLSERLGRDTKKHLVVPGDTITTDTGFMRGHGTYMGEEKLIASVAGSVERVNKLICVKALKTRYIGEVGDIVVGRITEVQQKRWKVETNSRLDSVLLLSSMNLPGGELRRRSAEDELAMRGFLQEGDLISAEVQAVFSDGAVSLHTRSLKYGKLGQGVLVQVSPSLVKRQKTHFHDLPCGASVILGNNGFIWIYPTPEHKEEEAGGFIANLEPVSLADREVISRLRNCIISLVTQRMMLYDTSILYCYEASLPHQIKDILKPEIMEEIVMETRQRLLEQEG</sequence>
<name>EXOS2_HUMAN</name>
<organism>
    <name type="scientific">Homo sapiens</name>
    <name type="common">Human</name>
    <dbReference type="NCBI Taxonomy" id="9606"/>
    <lineage>
        <taxon>Eukaryota</taxon>
        <taxon>Metazoa</taxon>
        <taxon>Chordata</taxon>
        <taxon>Craniata</taxon>
        <taxon>Vertebrata</taxon>
        <taxon>Euteleostomi</taxon>
        <taxon>Mammalia</taxon>
        <taxon>Eutheria</taxon>
        <taxon>Euarchontoglires</taxon>
        <taxon>Primates</taxon>
        <taxon>Haplorrhini</taxon>
        <taxon>Catarrhini</taxon>
        <taxon>Hominidae</taxon>
        <taxon>Homo</taxon>
    </lineage>
</organism>
<proteinExistence type="evidence at protein level"/>